<organism>
    <name type="scientific">Oceanobacillus iheyensis (strain DSM 14371 / CIP 107618 / JCM 11309 / KCTC 3954 / HTE831)</name>
    <dbReference type="NCBI Taxonomy" id="221109"/>
    <lineage>
        <taxon>Bacteria</taxon>
        <taxon>Bacillati</taxon>
        <taxon>Bacillota</taxon>
        <taxon>Bacilli</taxon>
        <taxon>Bacillales</taxon>
        <taxon>Bacillaceae</taxon>
        <taxon>Oceanobacillus</taxon>
    </lineage>
</organism>
<feature type="chain" id="PRO_0000142965" description="Porphobilinogen deaminase">
    <location>
        <begin position="1"/>
        <end position="309"/>
    </location>
</feature>
<feature type="modified residue" description="S-(dipyrrolylmethanemethyl)cysteine" evidence="1">
    <location>
        <position position="241"/>
    </location>
</feature>
<name>HEM3_OCEIH</name>
<comment type="function">
    <text evidence="1">Tetrapolymerization of the monopyrrole PBG into the hydroxymethylbilane pre-uroporphyrinogen in several discrete steps.</text>
</comment>
<comment type="catalytic activity">
    <reaction evidence="1">
        <text>4 porphobilinogen + H2O = hydroxymethylbilane + 4 NH4(+)</text>
        <dbReference type="Rhea" id="RHEA:13185"/>
        <dbReference type="ChEBI" id="CHEBI:15377"/>
        <dbReference type="ChEBI" id="CHEBI:28938"/>
        <dbReference type="ChEBI" id="CHEBI:57845"/>
        <dbReference type="ChEBI" id="CHEBI:58126"/>
        <dbReference type="EC" id="2.5.1.61"/>
    </reaction>
</comment>
<comment type="cofactor">
    <cofactor evidence="1">
        <name>dipyrromethane</name>
        <dbReference type="ChEBI" id="CHEBI:60342"/>
    </cofactor>
    <text evidence="1">Binds 1 dipyrromethane group covalently.</text>
</comment>
<comment type="pathway">
    <text evidence="1">Porphyrin-containing compound metabolism; protoporphyrin-IX biosynthesis; coproporphyrinogen-III from 5-aminolevulinate: step 2/4.</text>
</comment>
<comment type="subunit">
    <text evidence="1">Monomer.</text>
</comment>
<comment type="miscellaneous">
    <text evidence="1">The porphobilinogen subunits are added to the dipyrromethane group.</text>
</comment>
<comment type="similarity">
    <text evidence="1">Belongs to the HMBS family.</text>
</comment>
<keyword id="KW-0627">Porphyrin biosynthesis</keyword>
<keyword id="KW-1185">Reference proteome</keyword>
<keyword id="KW-0808">Transferase</keyword>
<accession>Q8CXC0</accession>
<protein>
    <recommendedName>
        <fullName evidence="1">Porphobilinogen deaminase</fullName>
        <shortName evidence="1">PBG</shortName>
        <ecNumber evidence="1">2.5.1.61</ecNumber>
    </recommendedName>
    <alternativeName>
        <fullName evidence="1">Hydroxymethylbilane synthase</fullName>
        <shortName evidence="1">HMBS</shortName>
    </alternativeName>
    <alternativeName>
        <fullName evidence="1">Pre-uroporphyrinogen synthase</fullName>
    </alternativeName>
</protein>
<dbReference type="EC" id="2.5.1.61" evidence="1"/>
<dbReference type="EMBL" id="BA000028">
    <property type="protein sequence ID" value="BAC14024.1"/>
    <property type="molecule type" value="Genomic_DNA"/>
</dbReference>
<dbReference type="RefSeq" id="WP_011066463.1">
    <property type="nucleotide sequence ID" value="NC_004193.1"/>
</dbReference>
<dbReference type="SMR" id="Q8CXC0"/>
<dbReference type="STRING" id="221109.gene:10734314"/>
<dbReference type="KEGG" id="oih:OB2068"/>
<dbReference type="eggNOG" id="COG0181">
    <property type="taxonomic scope" value="Bacteria"/>
</dbReference>
<dbReference type="HOGENOM" id="CLU_019704_0_2_9"/>
<dbReference type="OrthoDB" id="9810298at2"/>
<dbReference type="PhylomeDB" id="Q8CXC0"/>
<dbReference type="UniPathway" id="UPA00251">
    <property type="reaction ID" value="UER00319"/>
</dbReference>
<dbReference type="Proteomes" id="UP000000822">
    <property type="component" value="Chromosome"/>
</dbReference>
<dbReference type="GO" id="GO:0005737">
    <property type="term" value="C:cytoplasm"/>
    <property type="evidence" value="ECO:0007669"/>
    <property type="project" value="TreeGrafter"/>
</dbReference>
<dbReference type="GO" id="GO:0004418">
    <property type="term" value="F:hydroxymethylbilane synthase activity"/>
    <property type="evidence" value="ECO:0007669"/>
    <property type="project" value="UniProtKB-UniRule"/>
</dbReference>
<dbReference type="GO" id="GO:0006782">
    <property type="term" value="P:protoporphyrinogen IX biosynthetic process"/>
    <property type="evidence" value="ECO:0007669"/>
    <property type="project" value="UniProtKB-UniRule"/>
</dbReference>
<dbReference type="CDD" id="cd13646">
    <property type="entry name" value="PBP2_EcHMBS_like"/>
    <property type="match status" value="1"/>
</dbReference>
<dbReference type="FunFam" id="3.30.160.40:FF:000001">
    <property type="entry name" value="Porphobilinogen deaminase"/>
    <property type="match status" value="1"/>
</dbReference>
<dbReference type="FunFam" id="3.40.190.10:FF:000004">
    <property type="entry name" value="Porphobilinogen deaminase"/>
    <property type="match status" value="1"/>
</dbReference>
<dbReference type="FunFam" id="3.40.190.10:FF:000005">
    <property type="entry name" value="Porphobilinogen deaminase"/>
    <property type="match status" value="1"/>
</dbReference>
<dbReference type="Gene3D" id="3.40.190.10">
    <property type="entry name" value="Periplasmic binding protein-like II"/>
    <property type="match status" value="2"/>
</dbReference>
<dbReference type="Gene3D" id="3.30.160.40">
    <property type="entry name" value="Porphobilinogen deaminase, C-terminal domain"/>
    <property type="match status" value="1"/>
</dbReference>
<dbReference type="HAMAP" id="MF_00260">
    <property type="entry name" value="Porphobil_deam"/>
    <property type="match status" value="1"/>
</dbReference>
<dbReference type="InterPro" id="IPR000860">
    <property type="entry name" value="HemC"/>
</dbReference>
<dbReference type="InterPro" id="IPR022419">
    <property type="entry name" value="Porphobilin_deaminase_cofac_BS"/>
</dbReference>
<dbReference type="InterPro" id="IPR022417">
    <property type="entry name" value="Porphobilin_deaminase_N"/>
</dbReference>
<dbReference type="InterPro" id="IPR022418">
    <property type="entry name" value="Porphobilinogen_deaminase_C"/>
</dbReference>
<dbReference type="InterPro" id="IPR036803">
    <property type="entry name" value="Porphobilinogen_deaminase_C_sf"/>
</dbReference>
<dbReference type="NCBIfam" id="TIGR00212">
    <property type="entry name" value="hemC"/>
    <property type="match status" value="1"/>
</dbReference>
<dbReference type="PANTHER" id="PTHR11557">
    <property type="entry name" value="PORPHOBILINOGEN DEAMINASE"/>
    <property type="match status" value="1"/>
</dbReference>
<dbReference type="PANTHER" id="PTHR11557:SF0">
    <property type="entry name" value="PORPHOBILINOGEN DEAMINASE"/>
    <property type="match status" value="1"/>
</dbReference>
<dbReference type="Pfam" id="PF01379">
    <property type="entry name" value="Porphobil_deam"/>
    <property type="match status" value="1"/>
</dbReference>
<dbReference type="Pfam" id="PF03900">
    <property type="entry name" value="Porphobil_deamC"/>
    <property type="match status" value="1"/>
</dbReference>
<dbReference type="PIRSF" id="PIRSF001438">
    <property type="entry name" value="4pyrrol_synth_OHMeBilane_synth"/>
    <property type="match status" value="1"/>
</dbReference>
<dbReference type="PRINTS" id="PR00151">
    <property type="entry name" value="PORPHBDMNASE"/>
</dbReference>
<dbReference type="SUPFAM" id="SSF53850">
    <property type="entry name" value="Periplasmic binding protein-like II"/>
    <property type="match status" value="1"/>
</dbReference>
<dbReference type="SUPFAM" id="SSF54782">
    <property type="entry name" value="Porphobilinogen deaminase (hydroxymethylbilane synthase), C-terminal domain"/>
    <property type="match status" value="1"/>
</dbReference>
<dbReference type="PROSITE" id="PS00533">
    <property type="entry name" value="PORPHOBILINOGEN_DEAM"/>
    <property type="match status" value="1"/>
</dbReference>
<proteinExistence type="inferred from homology"/>
<gene>
    <name evidence="1" type="primary">hemC</name>
    <name type="ordered locus">OB2068</name>
</gene>
<reference key="1">
    <citation type="journal article" date="2002" name="Nucleic Acids Res.">
        <title>Genome sequence of Oceanobacillus iheyensis isolated from the Iheya Ridge and its unexpected adaptive capabilities to extreme environments.</title>
        <authorList>
            <person name="Takami H."/>
            <person name="Takaki Y."/>
            <person name="Uchiyama I."/>
        </authorList>
    </citation>
    <scope>NUCLEOTIDE SEQUENCE [LARGE SCALE GENOMIC DNA]</scope>
    <source>
        <strain>DSM 14371 / CIP 107618 / JCM 11309 / KCTC 3954 / HTE831</strain>
    </source>
</reference>
<evidence type="ECO:0000255" key="1">
    <source>
        <dbReference type="HAMAP-Rule" id="MF_00260"/>
    </source>
</evidence>
<sequence>MRKIIVGTRKSNLALTQTEWVIDQLKKAGVKNEFEIKKIVTKGDQILDVTLSKVGGKGLFVKEIEKAMFDKEIDLAVHSMKDMPAVIPEGLTISSIPEREDHRDAYLAKDNILLQDLPEGAIVGTSSLRRGAQILAERPDLTIKWIRGNIETRIRKLQEEDYDAIILAVSGLKRVGLSEELITEYLEPEVCVPAVGQGALAIESREDDEELTNIVKKIHDAYTAKTVSAERTFLHLLEGGCQVPIGGYAYLDGDEVVLTALVGDPDGTTILKETVRGTEPTEVGKEAAELLISQGAKEIVDRVKEEMDQ</sequence>